<protein>
    <recommendedName>
        <fullName evidence="17">Cytochrome P450 monooxygenase cloA</fullName>
        <ecNumber evidence="9">1.-.-.-</ecNumber>
    </recommendedName>
    <alternativeName>
        <fullName evidence="18">Clavine oxidase</fullName>
        <shortName evidence="18">CLOA</shortName>
    </alternativeName>
    <alternativeName>
        <fullName evidence="17">Ergot alkaloid synthesis protein cloA</fullName>
    </alternativeName>
</protein>
<organism>
    <name type="scientific">Claviceps purpurea (strain 20.1)</name>
    <name type="common">Ergot fungus</name>
    <name type="synonym">Sphacelia segetum</name>
    <dbReference type="NCBI Taxonomy" id="1111077"/>
    <lineage>
        <taxon>Eukaryota</taxon>
        <taxon>Fungi</taxon>
        <taxon>Dikarya</taxon>
        <taxon>Ascomycota</taxon>
        <taxon>Pezizomycotina</taxon>
        <taxon>Sordariomycetes</taxon>
        <taxon>Hypocreomycetidae</taxon>
        <taxon>Hypocreales</taxon>
        <taxon>Clavicipitaceae</taxon>
        <taxon>Claviceps</taxon>
    </lineage>
</organism>
<keyword id="KW-0325">Glycoprotein</keyword>
<keyword id="KW-0349">Heme</keyword>
<keyword id="KW-0408">Iron</keyword>
<keyword id="KW-0472">Membrane</keyword>
<keyword id="KW-0479">Metal-binding</keyword>
<keyword id="KW-0503">Monooxygenase</keyword>
<keyword id="KW-0560">Oxidoreductase</keyword>
<keyword id="KW-1185">Reference proteome</keyword>
<keyword id="KW-0812">Transmembrane</keyword>
<keyword id="KW-1133">Transmembrane helix</keyword>
<accession>M1WEN7</accession>
<accession>G8GV62</accession>
<name>CLOA_CLAP2</name>
<gene>
    <name evidence="18" type="primary">cloA</name>
    <name evidence="17" type="synonym">p450-1</name>
    <name type="ORF">CPUR_04082</name>
</gene>
<comment type="function">
    <text evidence="2 5 6 7 8 9 10 11 12 13 14 15 16 20 21">Cytochrome P450 monooxygenase; part of the gene cluster that mediates the biosynthesis of fungal ergot alkaloid (PubMed:10071219, PubMed:14700635, PubMed:14732265, PubMed:15904941, PubMed:17308187, PubMed:17720822). DmaW catalyzes the first step of ergot alkaloid biosynthesis by condensing dimethylallyl diphosphate (DMAP) and tryptophan to form 4-dimethylallyl-L-tryptophan (PubMed:14732265). The second step is catalyzed by the methyltransferase easF that methylates 4-dimethylallyl-L-tryptophan in the presence of S-adenosyl-L-methionine, resulting in the formation of 4-dimethylallyl-L-abrine (By similarity). The catalase easC and the FAD-dependent oxidoreductase easE then transform 4-dimethylallyl-L-abrine to chanoclavine-I which is further oxidized by easD in the presence of NAD(+), resulting in the formation of chanoclavine-I aldehyde (PubMed:20118373, PubMed:21409592). Agroclavine dehydrogenase easG then mediates the conversion of chanoclavine-I aldehyde to agroclavine via a non-enzymatic adduct reaction: the substrate is an iminium intermediate that is formed spontaneously from chanoclavine-I aldehyde in the presence of glutathione (PubMed:20735127, PubMed:21494745). The presence of easA is not required to complete this reaction (PubMed:21494745). Further conversion of agroclavine to paspalic acid is a two-step process involving oxidation of agroclavine to elymoclavine and of elymoclavine to paspalic acid, the second step being performed by the elymoclavine oxidase cloA (PubMed:16538694, PubMed:17720822). Paspalic acid is then further converted to D-lysergic acid (PubMed:15904941). Ergopeptines are assembled from D-lysergic acid and three different amino acids by the D-lysergyl-peptide-synthetases composed each of a monomudular and a trimodular nonribosomal peptide synthetase subunit (PubMed:14700635, PubMed:15904941). LpsB and lpsC encode the monomodular subunits responsible for D-lysergic acid activation and incorporation into the ergopeptine backbone (PubMed:14700635). LpsA1 and A2 subunits encode the trimodular nonribosomal peptide synthetase assembling the tripeptide portion of ergopeptines (PubMed:14700635). LpsA1 is responsible for formation of the major ergopeptine, ergotamine, and lpsA2 for alpha-ergocryptine, the minor ergopeptine of the total alkaloid mixture elaborated by C.purpurea (PubMed:17560817, PubMed:19139103). D-lysergyl-tripeptides are assembled by the nonribosomal peptide synthetases and released as N-(D-lysergyl-aminoacyl)-lactams (PubMed:24361048). Cyclolization of the D-lysergyl-tripeptides is performed by the Fe(2+)/2-ketoglutarate-dependent dioxygenase easH which introduces a hydroxyl group into N-(D-lysergyl-aminoacyl)-lactam at alpha-C of the aminoacyl residue followed by spontaneous condensation with the terminal lactam carbonyl group (PubMed:24361048).</text>
</comment>
<comment type="cofactor">
    <cofactor evidence="1">
        <name>heme</name>
        <dbReference type="ChEBI" id="CHEBI:30413"/>
    </cofactor>
</comment>
<comment type="pathway">
    <text evidence="9">Alkaloid biosynthesis; ergot alkaloid biosynthesis.</text>
</comment>
<comment type="subcellular location">
    <subcellularLocation>
        <location evidence="3">Membrane</location>
        <topology evidence="3">Single-pass membrane protein</topology>
    </subcellularLocation>
</comment>
<comment type="disruption phenotype">
    <text evidence="9">Causes a blockage in the conversion of clavines to D-lysergic acid (PubMed:16538694). Abolishes the production of the peptide alkaloids ergotamine and ergocryptine but accumulates substantial amounts agroclavine accompanied by varying amounts of elymoclavine and chanoclavine which ranged between 10 and 20 percent of the amount of agroclavine formed (PubMed:16538694). Also leads to traces of chanoclavine aldehyde (PubMed:16538694).</text>
</comment>
<comment type="similarity">
    <text evidence="19">Belongs to the cytochrome P450 family.</text>
</comment>
<feature type="chain" id="PRO_0000439116" description="Cytochrome P450 monooxygenase cloA">
    <location>
        <begin position="1"/>
        <end position="507"/>
    </location>
</feature>
<feature type="transmembrane region" description="Helical" evidence="3">
    <location>
        <begin position="15"/>
        <end position="35"/>
    </location>
</feature>
<feature type="binding site" description="axial binding residue" evidence="1">
    <location>
        <position position="450"/>
    </location>
    <ligand>
        <name>heme</name>
        <dbReference type="ChEBI" id="CHEBI:30413"/>
    </ligand>
    <ligandPart>
        <name>Fe</name>
        <dbReference type="ChEBI" id="CHEBI:18248"/>
    </ligandPart>
</feature>
<feature type="glycosylation site" description="N-linked (GlcNAc...) asparagine" evidence="4">
    <location>
        <position position="247"/>
    </location>
</feature>
<proteinExistence type="evidence at protein level"/>
<evidence type="ECO:0000250" key="1">
    <source>
        <dbReference type="UniProtKB" id="P04798"/>
    </source>
</evidence>
<evidence type="ECO:0000250" key="2">
    <source>
        <dbReference type="UniProtKB" id="Q50EL0"/>
    </source>
</evidence>
<evidence type="ECO:0000255" key="3"/>
<evidence type="ECO:0000255" key="4">
    <source>
        <dbReference type="PROSITE-ProRule" id="PRU00498"/>
    </source>
</evidence>
<evidence type="ECO:0000269" key="5">
    <source>
    </source>
</evidence>
<evidence type="ECO:0000269" key="6">
    <source>
    </source>
</evidence>
<evidence type="ECO:0000269" key="7">
    <source>
    </source>
</evidence>
<evidence type="ECO:0000269" key="8">
    <source>
    </source>
</evidence>
<evidence type="ECO:0000269" key="9">
    <source>
    </source>
</evidence>
<evidence type="ECO:0000269" key="10">
    <source>
    </source>
</evidence>
<evidence type="ECO:0000269" key="11">
    <source>
    </source>
</evidence>
<evidence type="ECO:0000269" key="12">
    <source>
    </source>
</evidence>
<evidence type="ECO:0000269" key="13">
    <source>
    </source>
</evidence>
<evidence type="ECO:0000269" key="14">
    <source>
    </source>
</evidence>
<evidence type="ECO:0000269" key="15">
    <source>
    </source>
</evidence>
<evidence type="ECO:0000269" key="16">
    <source>
    </source>
</evidence>
<evidence type="ECO:0000303" key="17">
    <source>
    </source>
</evidence>
<evidence type="ECO:0000303" key="18">
    <source>
    </source>
</evidence>
<evidence type="ECO:0000305" key="19"/>
<evidence type="ECO:0000305" key="20">
    <source>
    </source>
</evidence>
<evidence type="ECO:0000305" key="21">
    <source>
    </source>
</evidence>
<sequence length="507" mass="58238">MSLQWLQQTRHELSWTWILLTTCIALISPLVLKGIYNVYFHPLRNIPGPKLAALTDFYAFYWNWIRDEGYSKQFSRLHEQYNSPIIRIGPNNVHTTQVEFYDVIFKSGSKWLKDKSFYKYFNGLDAMIEPYQYRTYRTHLAPLYAQRAIDGLAPKLRSDLTNSASGMMRQTKNGQTVNMAKVLRTLSTSMILHNLFSLDISLNDGDEYHPFLEAFEQLMTQSWLFVTYPMVPMVLSLIPGTSFARFNSSYTTFSNYCTAWNDEDMRKQRESEEQSTRDSHTKRYLSLKDDDARKKTAIPYPLDDVFNFVAGGSDTTAYTTACAFYHILSSPTVRENLVVELDEHSSIIRDEFDYNKIQNLPYLNAVIKETLRISVPVPGSLPRIVPQGGITIGSFSLPAGTGVSITQQAISFNEKIFPLPHSFLPERWIGPKSVGLDKWNIAFSRGPRQCIGTTLAYLELRCVIAYFFSRFDMALTGNCGDQLRWVDRFVAVNLDDVELQILADRWT</sequence>
<dbReference type="EC" id="1.-.-.-" evidence="9"/>
<dbReference type="EMBL" id="JN186799">
    <property type="protein sequence ID" value="AET79191.1"/>
    <property type="molecule type" value="Genomic_DNA"/>
</dbReference>
<dbReference type="EMBL" id="CAGA01000020">
    <property type="protein sequence ID" value="CCE30234.1"/>
    <property type="molecule type" value="Genomic_DNA"/>
</dbReference>
<dbReference type="SMR" id="M1WEN7"/>
<dbReference type="STRING" id="1111077.M1WEN7"/>
<dbReference type="GlyCosmos" id="M1WEN7">
    <property type="glycosylation" value="1 site, No reported glycans"/>
</dbReference>
<dbReference type="VEuPathDB" id="FungiDB:CPUR_04082"/>
<dbReference type="eggNOG" id="KOG0156">
    <property type="taxonomic scope" value="Eukaryota"/>
</dbReference>
<dbReference type="HOGENOM" id="CLU_001570_14_4_1"/>
<dbReference type="OrthoDB" id="4935633at2759"/>
<dbReference type="PhylomeDB" id="M1WEN7"/>
<dbReference type="UniPathway" id="UPA00327"/>
<dbReference type="Proteomes" id="UP000016801">
    <property type="component" value="Unassembled WGS sequence"/>
</dbReference>
<dbReference type="GO" id="GO:0016020">
    <property type="term" value="C:membrane"/>
    <property type="evidence" value="ECO:0007669"/>
    <property type="project" value="UniProtKB-SubCell"/>
</dbReference>
<dbReference type="GO" id="GO:0020037">
    <property type="term" value="F:heme binding"/>
    <property type="evidence" value="ECO:0007669"/>
    <property type="project" value="InterPro"/>
</dbReference>
<dbReference type="GO" id="GO:0005506">
    <property type="term" value="F:iron ion binding"/>
    <property type="evidence" value="ECO:0007669"/>
    <property type="project" value="InterPro"/>
</dbReference>
<dbReference type="GO" id="GO:0004497">
    <property type="term" value="F:monooxygenase activity"/>
    <property type="evidence" value="ECO:0007669"/>
    <property type="project" value="UniProtKB-KW"/>
</dbReference>
<dbReference type="GO" id="GO:0016705">
    <property type="term" value="F:oxidoreductase activity, acting on paired donors, with incorporation or reduction of molecular oxygen"/>
    <property type="evidence" value="ECO:0007669"/>
    <property type="project" value="InterPro"/>
</dbReference>
<dbReference type="GO" id="GO:0035835">
    <property type="term" value="P:indole alkaloid biosynthetic process"/>
    <property type="evidence" value="ECO:0007669"/>
    <property type="project" value="UniProtKB-UniPathway"/>
</dbReference>
<dbReference type="CDD" id="cd11062">
    <property type="entry name" value="CYP58-like"/>
    <property type="match status" value="1"/>
</dbReference>
<dbReference type="Gene3D" id="1.10.630.10">
    <property type="entry name" value="Cytochrome P450"/>
    <property type="match status" value="1"/>
</dbReference>
<dbReference type="InterPro" id="IPR001128">
    <property type="entry name" value="Cyt_P450"/>
</dbReference>
<dbReference type="InterPro" id="IPR017972">
    <property type="entry name" value="Cyt_P450_CS"/>
</dbReference>
<dbReference type="InterPro" id="IPR002401">
    <property type="entry name" value="Cyt_P450_E_grp-I"/>
</dbReference>
<dbReference type="InterPro" id="IPR036396">
    <property type="entry name" value="Cyt_P450_sf"/>
</dbReference>
<dbReference type="InterPro" id="IPR050121">
    <property type="entry name" value="Cytochrome_P450_monoxygenase"/>
</dbReference>
<dbReference type="PANTHER" id="PTHR24305">
    <property type="entry name" value="CYTOCHROME P450"/>
    <property type="match status" value="1"/>
</dbReference>
<dbReference type="PANTHER" id="PTHR24305:SF210">
    <property type="entry name" value="CYTOCHROME P450 MONOOXYGENASE ASQL-RELATED"/>
    <property type="match status" value="1"/>
</dbReference>
<dbReference type="Pfam" id="PF00067">
    <property type="entry name" value="p450"/>
    <property type="match status" value="1"/>
</dbReference>
<dbReference type="PRINTS" id="PR00463">
    <property type="entry name" value="EP450I"/>
</dbReference>
<dbReference type="PRINTS" id="PR00385">
    <property type="entry name" value="P450"/>
</dbReference>
<dbReference type="SUPFAM" id="SSF48264">
    <property type="entry name" value="Cytochrome P450"/>
    <property type="match status" value="1"/>
</dbReference>
<dbReference type="PROSITE" id="PS00086">
    <property type="entry name" value="CYTOCHROME_P450"/>
    <property type="match status" value="1"/>
</dbReference>
<reference key="1">
    <citation type="submission" date="2011-06" db="EMBL/GenBank/DDBJ databases">
        <authorList>
            <person name="Florea S."/>
            <person name="Oeser B."/>
            <person name="Tudzynski P."/>
            <person name="Schardl C.L."/>
        </authorList>
    </citation>
    <scope>NUCLEOTIDE SEQUENCE [GENOMIC DNA]</scope>
    <source>
        <strain>20.1</strain>
    </source>
</reference>
<reference key="2">
    <citation type="journal article" date="2013" name="PLoS Genet.">
        <title>Plant-symbiotic fungi as chemical engineers: Multi-genome analysis of the Clavicipitaceae reveals dynamics of alkaloid loci.</title>
        <authorList>
            <person name="Schardl C.L."/>
            <person name="Young C.A."/>
            <person name="Hesse U."/>
            <person name="Amyotte S.G."/>
            <person name="Andreeva K."/>
            <person name="Calie P.J."/>
            <person name="Fleetwood D.J."/>
            <person name="Haws D.C."/>
            <person name="Moore N."/>
            <person name="Oeser B."/>
            <person name="Panaccione D.G."/>
            <person name="Schweri K.K."/>
            <person name="Voisey C.R."/>
            <person name="Farman M.L."/>
            <person name="Jaromczyk J.W."/>
            <person name="Roe B.A."/>
            <person name="O'Sullivan D.M."/>
            <person name="Scott B."/>
            <person name="Tudzynski P."/>
            <person name="An Z."/>
            <person name="Arnaoudova E.G."/>
            <person name="Bullock C.T."/>
            <person name="Charlton N.D."/>
            <person name="Chen L."/>
            <person name="Cox M."/>
            <person name="Dinkins R.D."/>
            <person name="Florea S."/>
            <person name="Glenn A.E."/>
            <person name="Gordon A."/>
            <person name="Gueldener U."/>
            <person name="Harris D.R."/>
            <person name="Hollin W."/>
            <person name="Jaromczyk J."/>
            <person name="Johnson R.D."/>
            <person name="Khan A.K."/>
            <person name="Leistner E."/>
            <person name="Leuchtmann A."/>
            <person name="Li C."/>
            <person name="Liu J."/>
            <person name="Liu J."/>
            <person name="Liu M."/>
            <person name="Mace W."/>
            <person name="Machado C."/>
            <person name="Nagabhyru P."/>
            <person name="Pan J."/>
            <person name="Schmid J."/>
            <person name="Sugawara K."/>
            <person name="Steiner U."/>
            <person name="Takach J.E."/>
            <person name="Tanaka E."/>
            <person name="Webb J.S."/>
            <person name="Wilson E.V."/>
            <person name="Wiseman J.L."/>
            <person name="Yoshida R."/>
            <person name="Zeng Z."/>
        </authorList>
    </citation>
    <scope>NUCLEOTIDE SEQUENCE [LARGE SCALE GENOMIC DNA]</scope>
    <source>
        <strain>20.1</strain>
    </source>
</reference>
<reference key="3">
    <citation type="journal article" date="1999" name="Mol. Gen. Genet.">
        <title>Evidence for an ergot alkaloid gene cluster in Claviceps purpurea.</title>
        <authorList>
            <person name="Tudzynski P."/>
            <person name="Hoelter K."/>
            <person name="Correia T.H."/>
            <person name="Arntz C."/>
            <person name="Grammel N."/>
            <person name="Keller U."/>
        </authorList>
    </citation>
    <scope>IDENTIFICATION IN THE EAS CLUSTER</scope>
    <scope>FUNCTION</scope>
    <source>
        <strain>P1 / 1029/N5</strain>
    </source>
</reference>
<reference key="4">
    <citation type="journal article" date="2001" name="Appl. Microbiol. Biotechnol.">
        <title>Biotechnology and genetics of ergot alkaloids.</title>
        <authorList>
            <person name="Tudzynski P."/>
            <person name="Correia T."/>
            <person name="Keller U."/>
        </authorList>
    </citation>
    <scope>BIOTECHNOLOGY</scope>
    <source>
        <strain>P1 / 1029/N5</strain>
    </source>
</reference>
<reference key="5">
    <citation type="journal article" date="2003" name="Chem. Biol.">
        <title>Molecular cloning and analysis of the ergopeptine assembly system in the ergot fungus Claviceps purpurea.</title>
        <authorList>
            <person name="Correia T."/>
            <person name="Grammel N."/>
            <person name="Ortel I."/>
            <person name="Keller U."/>
            <person name="Tudzynski P."/>
        </authorList>
    </citation>
    <scope>FUNCTION</scope>
</reference>
<reference key="6">
    <citation type="journal article" date="2004" name="Fungal Genet. Biol.">
        <title>The determinant step in ergot alkaloid biosynthesis by an endophyte of perennial ryegrass.</title>
        <authorList>
            <person name="Wang J."/>
            <person name="Machado C."/>
            <person name="Panaccione D.G."/>
            <person name="Tsai H.-F."/>
            <person name="Schardl C.L."/>
        </authorList>
    </citation>
    <scope>FUNCTION</scope>
    <source>
        <strain>ATCC 20102 / Farmitalia FI 32/17</strain>
    </source>
</reference>
<reference key="7">
    <citation type="journal article" date="2005" name="Phytochemistry">
        <title>The ergot alkaloid gene cluster in Claviceps purpurea: extension of the cluster sequence and intra species evolution.</title>
        <authorList>
            <person name="Haarmann T."/>
            <person name="Machado C."/>
            <person name="Lubbe Y."/>
            <person name="Correia T."/>
            <person name="Schardl C.L."/>
            <person name="Panaccione D.G."/>
            <person name="Tudzynski P."/>
        </authorList>
    </citation>
    <scope>IDENTIFICATION IN THE EAS CLUSTER</scope>
    <scope>FUNCTION</scope>
</reference>
<reference key="8">
    <citation type="journal article" date="2006" name="ChemBioChem">
        <title>Identification of the cytochrome P450 monooxygenase that bridges the clavine and ergoline alkaloid pathways.</title>
        <authorList>
            <person name="Haarmann T."/>
            <person name="Ortel I."/>
            <person name="Tudzynski P."/>
            <person name="Keller U."/>
        </authorList>
    </citation>
    <scope>FUNCTION</scope>
    <scope>DISRUPTION PHENOTYPE</scope>
    <scope>CATALYTIC ACTIVITY</scope>
    <scope>PATHWAY</scope>
    <source>
        <strain>P1 / 1029/N5</strain>
    </source>
</reference>
<reference key="9">
    <citation type="journal article" date="2007" name="Appl. Environ. Microbiol.">
        <title>A complex ergovaline gene cluster in epichloe endophytes of grasses.</title>
        <authorList>
            <person name="Fleetwood D.J."/>
            <person name="Scott B."/>
            <person name="Lane G.A."/>
            <person name="Tanaka A."/>
            <person name="Johnson R.D."/>
        </authorList>
    </citation>
    <scope>FUNCTION</scope>
</reference>
<reference key="10">
    <citation type="journal article" date="2007" name="Appl. Environ. Microbiol.">
        <title>Comparison of ergot alkaloid biosynthesis gene clusters in Claviceps species indicates loss of late pathway steps in evolution of C. fusiformis.</title>
        <authorList>
            <person name="Lorenz N."/>
            <person name="Wilson E.V."/>
            <person name="Machado C."/>
            <person name="Schardl C.L."/>
            <person name="Tudzynski P."/>
        </authorList>
    </citation>
    <scope>FUNCTION</scope>
</reference>
<reference key="11">
    <citation type="journal article" date="2008" name="Fungal Genet. Biol.">
        <title>Use of a nonhomologous end joining deficient strain (Deltaku70) of the ergot fungus Claviceps purpurea for identification of a nonribosomal peptide synthetase gene involved in ergotamine biosynthesis.</title>
        <authorList>
            <person name="Haarmann T."/>
            <person name="Lorenz N."/>
            <person name="Tudzynski P."/>
        </authorList>
    </citation>
    <scope>FUNCTION</scope>
    <scope>DISRUPTION PHENOTYPE</scope>
</reference>
<reference key="12">
    <citation type="journal article" date="2009" name="J. Biol. Chem.">
        <title>Combinatorial assembly of simple and complex D-lysergic acid alkaloid peptide classes in the ergot fungus Claviceps purpurea.</title>
        <authorList>
            <person name="Ortel I."/>
            <person name="Keller U."/>
        </authorList>
    </citation>
    <scope>FUNCTION</scope>
</reference>
<reference key="13">
    <citation type="journal article" date="2010" name="Appl. Environ. Microbiol.">
        <title>Alkaloid cluster gene ccsA of the ergot fungus Claviceps purpurea encodes chanoclavine I synthase, a flavin adenine dinucleotide-containing oxidoreductase mediating the transformation of N-methyl-dimethylallyltryptophan to chanoclavine I.</title>
        <authorList>
            <person name="Lorenz N."/>
            <person name="Olsovska J."/>
            <person name="Sulc M."/>
            <person name="Tudzynski P."/>
        </authorList>
    </citation>
    <scope>FUNCTION</scope>
</reference>
<reference key="14">
    <citation type="journal article" date="2010" name="J. Am. Chem. Soc.">
        <title>Controlling a structural branch point in ergot alkaloid biosynthesis.</title>
        <authorList>
            <person name="Cheng J.Z."/>
            <person name="Coyle C.M."/>
            <person name="Panaccione D.G."/>
            <person name="O'Connor S.E."/>
        </authorList>
    </citation>
    <scope>FUNCTION</scope>
    <source>
        <strain>ATCC 20102 / Farmitalia FI 32/17</strain>
    </source>
</reference>
<reference key="15">
    <citation type="journal article" date="2011" name="Curr. Genet.">
        <title>Ergot cluster-encoded catalase is required for synthesis of chanoclavine-I in Aspergillus fumigatus.</title>
        <authorList>
            <person name="Goetz K.E."/>
            <person name="Coyle C.M."/>
            <person name="Cheng J.Z."/>
            <person name="O'Connor S.E."/>
            <person name="Panaccione D.G."/>
        </authorList>
    </citation>
    <scope>FUNCTION</scope>
</reference>
<reference key="16">
    <citation type="journal article" date="2011" name="Org. Biomol. Chem.">
        <title>New insights into ergot alkaloid biosynthesis in Claviceps purpurea: an agroclavine synthase EasG catalyses, via a non-enzymatic adduct with reduced glutathione, the conversion of chanoclavine-I aldehyde to agroclavine.</title>
        <authorList>
            <person name="Matuschek M."/>
            <person name="Wallwey C."/>
            <person name="Xie X."/>
            <person name="Li S.M."/>
        </authorList>
    </citation>
    <scope>FUNCTION</scope>
</reference>
<reference key="17">
    <citation type="journal article" date="2014" name="Chem. Biol.">
        <title>Cyclolization of D-lysergic acid alkaloid peptides.</title>
        <authorList>
            <person name="Havemann J."/>
            <person name="Vogel D."/>
            <person name="Loll B."/>
            <person name="Keller U."/>
        </authorList>
    </citation>
    <scope>FUNCTION</scope>
</reference>